<gene>
    <name evidence="1" type="primary">fadA</name>
    <name type="ordered locus">Ent638_3950</name>
</gene>
<organism>
    <name type="scientific">Enterobacter sp. (strain 638)</name>
    <dbReference type="NCBI Taxonomy" id="399742"/>
    <lineage>
        <taxon>Bacteria</taxon>
        <taxon>Pseudomonadati</taxon>
        <taxon>Pseudomonadota</taxon>
        <taxon>Gammaproteobacteria</taxon>
        <taxon>Enterobacterales</taxon>
        <taxon>Enterobacteriaceae</taxon>
        <taxon>Enterobacter</taxon>
    </lineage>
</organism>
<accession>A4WFX5</accession>
<name>FADA_ENT38</name>
<reference key="1">
    <citation type="journal article" date="2010" name="PLoS Genet.">
        <title>Genome sequence of the plant growth promoting endophytic bacterium Enterobacter sp. 638.</title>
        <authorList>
            <person name="Taghavi S."/>
            <person name="van der Lelie D."/>
            <person name="Hoffman A."/>
            <person name="Zhang Y.B."/>
            <person name="Walla M.D."/>
            <person name="Vangronsveld J."/>
            <person name="Newman L."/>
            <person name="Monchy S."/>
        </authorList>
    </citation>
    <scope>NUCLEOTIDE SEQUENCE [LARGE SCALE GENOMIC DNA]</scope>
    <source>
        <strain>638</strain>
    </source>
</reference>
<proteinExistence type="inferred from homology"/>
<protein>
    <recommendedName>
        <fullName evidence="1">3-ketoacyl-CoA thiolase</fullName>
        <ecNumber evidence="1">2.3.1.16</ecNumber>
    </recommendedName>
    <alternativeName>
        <fullName evidence="1">Acetyl-CoA acyltransferase</fullName>
    </alternativeName>
    <alternativeName>
        <fullName evidence="1">Beta-ketothiolase</fullName>
    </alternativeName>
    <alternativeName>
        <fullName evidence="1">Fatty acid oxidation complex subunit beta</fullName>
    </alternativeName>
</protein>
<feature type="chain" id="PRO_0000323544" description="3-ketoacyl-CoA thiolase">
    <location>
        <begin position="1"/>
        <end position="387"/>
    </location>
</feature>
<feature type="active site" description="Acyl-thioester intermediate" evidence="1">
    <location>
        <position position="91"/>
    </location>
</feature>
<feature type="active site" description="Proton acceptor" evidence="1">
    <location>
        <position position="343"/>
    </location>
</feature>
<feature type="active site" description="Proton acceptor" evidence="1">
    <location>
        <position position="373"/>
    </location>
</feature>
<sequence>MEKVVIVDAIRTPMGRSKGGAFRHVRAEDLSAHLMRSLLARNPALEASAIDDIYWGCVQQTLEQGFNIARNASLLAEIPHSVPAVTVNRLCGSSMQALHDAARMIMTGDAQVCMVGGVEHMGHVPMSHGVDFHPGMSRNVAKAAGMMGLTAEMLSRMHGISREMQDQFAARSHARAWAATQSGAFKNEILPTGGHDVDGVLKQYYYDEVIRPETTVEALSALRPAFDPVTGTVTAGTSSALSDGAAAMLVMSESRARELGLTPRARIRSMAVVGCDPSIMGYGPVPASKLALKKAGLTASEIDVFEMNEAFAAQILPCIKDLGLMEQIDEKINLNGGAIALGHPLGCSGARISTTLINLMERKDAQFGLATMCIGLGQGIATVFERV</sequence>
<keyword id="KW-0012">Acyltransferase</keyword>
<keyword id="KW-0963">Cytoplasm</keyword>
<keyword id="KW-0276">Fatty acid metabolism</keyword>
<keyword id="KW-0442">Lipid degradation</keyword>
<keyword id="KW-0443">Lipid metabolism</keyword>
<keyword id="KW-0808">Transferase</keyword>
<dbReference type="EC" id="2.3.1.16" evidence="1"/>
<dbReference type="EMBL" id="CP000653">
    <property type="protein sequence ID" value="ABP62605.1"/>
    <property type="molecule type" value="Genomic_DNA"/>
</dbReference>
<dbReference type="RefSeq" id="WP_015960910.1">
    <property type="nucleotide sequence ID" value="NC_009436.1"/>
</dbReference>
<dbReference type="SMR" id="A4WFX5"/>
<dbReference type="STRING" id="399742.Ent638_3950"/>
<dbReference type="KEGG" id="ent:Ent638_3950"/>
<dbReference type="eggNOG" id="COG0183">
    <property type="taxonomic scope" value="Bacteria"/>
</dbReference>
<dbReference type="HOGENOM" id="CLU_031026_2_3_6"/>
<dbReference type="OrthoDB" id="9764638at2"/>
<dbReference type="UniPathway" id="UPA00659"/>
<dbReference type="Proteomes" id="UP000000230">
    <property type="component" value="Chromosome"/>
</dbReference>
<dbReference type="GO" id="GO:0005737">
    <property type="term" value="C:cytoplasm"/>
    <property type="evidence" value="ECO:0007669"/>
    <property type="project" value="UniProtKB-SubCell"/>
</dbReference>
<dbReference type="GO" id="GO:0003988">
    <property type="term" value="F:acetyl-CoA C-acyltransferase activity"/>
    <property type="evidence" value="ECO:0007669"/>
    <property type="project" value="UniProtKB-UniRule"/>
</dbReference>
<dbReference type="GO" id="GO:0006635">
    <property type="term" value="P:fatty acid beta-oxidation"/>
    <property type="evidence" value="ECO:0007669"/>
    <property type="project" value="UniProtKB-UniRule"/>
</dbReference>
<dbReference type="GO" id="GO:0010124">
    <property type="term" value="P:phenylacetate catabolic process"/>
    <property type="evidence" value="ECO:0007669"/>
    <property type="project" value="TreeGrafter"/>
</dbReference>
<dbReference type="CDD" id="cd00751">
    <property type="entry name" value="thiolase"/>
    <property type="match status" value="1"/>
</dbReference>
<dbReference type="FunFam" id="3.40.47.10:FF:000010">
    <property type="entry name" value="Acetyl-CoA acetyltransferase (Thiolase)"/>
    <property type="match status" value="1"/>
</dbReference>
<dbReference type="Gene3D" id="3.40.47.10">
    <property type="match status" value="2"/>
</dbReference>
<dbReference type="HAMAP" id="MF_01620">
    <property type="entry name" value="FadA"/>
    <property type="match status" value="1"/>
</dbReference>
<dbReference type="InterPro" id="IPR012805">
    <property type="entry name" value="FadA"/>
</dbReference>
<dbReference type="InterPro" id="IPR002155">
    <property type="entry name" value="Thiolase"/>
</dbReference>
<dbReference type="InterPro" id="IPR016039">
    <property type="entry name" value="Thiolase-like"/>
</dbReference>
<dbReference type="InterPro" id="IPR050215">
    <property type="entry name" value="Thiolase-like_sf_Thiolase"/>
</dbReference>
<dbReference type="InterPro" id="IPR020615">
    <property type="entry name" value="Thiolase_acyl_enz_int_AS"/>
</dbReference>
<dbReference type="InterPro" id="IPR020610">
    <property type="entry name" value="Thiolase_AS"/>
</dbReference>
<dbReference type="InterPro" id="IPR020617">
    <property type="entry name" value="Thiolase_C"/>
</dbReference>
<dbReference type="InterPro" id="IPR020613">
    <property type="entry name" value="Thiolase_CS"/>
</dbReference>
<dbReference type="InterPro" id="IPR020616">
    <property type="entry name" value="Thiolase_N"/>
</dbReference>
<dbReference type="NCBIfam" id="TIGR01930">
    <property type="entry name" value="AcCoA-C-Actrans"/>
    <property type="match status" value="1"/>
</dbReference>
<dbReference type="NCBIfam" id="TIGR02445">
    <property type="entry name" value="fadA"/>
    <property type="match status" value="1"/>
</dbReference>
<dbReference type="NCBIfam" id="NF006510">
    <property type="entry name" value="PRK08947.1"/>
    <property type="match status" value="1"/>
</dbReference>
<dbReference type="PANTHER" id="PTHR43853:SF11">
    <property type="entry name" value="3-KETOACYL-COA THIOLASE FADA"/>
    <property type="match status" value="1"/>
</dbReference>
<dbReference type="PANTHER" id="PTHR43853">
    <property type="entry name" value="3-KETOACYL-COA THIOLASE, PEROXISOMAL"/>
    <property type="match status" value="1"/>
</dbReference>
<dbReference type="Pfam" id="PF02803">
    <property type="entry name" value="Thiolase_C"/>
    <property type="match status" value="1"/>
</dbReference>
<dbReference type="Pfam" id="PF00108">
    <property type="entry name" value="Thiolase_N"/>
    <property type="match status" value="1"/>
</dbReference>
<dbReference type="PIRSF" id="PIRSF000429">
    <property type="entry name" value="Ac-CoA_Ac_transf"/>
    <property type="match status" value="1"/>
</dbReference>
<dbReference type="SUPFAM" id="SSF53901">
    <property type="entry name" value="Thiolase-like"/>
    <property type="match status" value="2"/>
</dbReference>
<dbReference type="PROSITE" id="PS00098">
    <property type="entry name" value="THIOLASE_1"/>
    <property type="match status" value="1"/>
</dbReference>
<dbReference type="PROSITE" id="PS00737">
    <property type="entry name" value="THIOLASE_2"/>
    <property type="match status" value="1"/>
</dbReference>
<dbReference type="PROSITE" id="PS00099">
    <property type="entry name" value="THIOLASE_3"/>
    <property type="match status" value="1"/>
</dbReference>
<evidence type="ECO:0000255" key="1">
    <source>
        <dbReference type="HAMAP-Rule" id="MF_01620"/>
    </source>
</evidence>
<comment type="function">
    <text evidence="1">Catalyzes the final step of fatty acid oxidation in which acetyl-CoA is released and the CoA ester of a fatty acid two carbons shorter is formed.</text>
</comment>
<comment type="catalytic activity">
    <reaction evidence="1">
        <text>an acyl-CoA + acetyl-CoA = a 3-oxoacyl-CoA + CoA</text>
        <dbReference type="Rhea" id="RHEA:21564"/>
        <dbReference type="ChEBI" id="CHEBI:57287"/>
        <dbReference type="ChEBI" id="CHEBI:57288"/>
        <dbReference type="ChEBI" id="CHEBI:58342"/>
        <dbReference type="ChEBI" id="CHEBI:90726"/>
        <dbReference type="EC" id="2.3.1.16"/>
    </reaction>
</comment>
<comment type="pathway">
    <text evidence="1">Lipid metabolism; fatty acid beta-oxidation.</text>
</comment>
<comment type="subunit">
    <text evidence="1">Heterotetramer of two alpha chains (FadB) and two beta chains (FadA).</text>
</comment>
<comment type="subcellular location">
    <subcellularLocation>
        <location evidence="1">Cytoplasm</location>
    </subcellularLocation>
</comment>
<comment type="similarity">
    <text evidence="1">Belongs to the thiolase-like superfamily. Thiolase family.</text>
</comment>